<reference key="1">
    <citation type="journal article" date="2011" name="J. Bacteriol.">
        <title>Comparative genomics of 28 Salmonella enterica isolates: evidence for CRISPR-mediated adaptive sublineage evolution.</title>
        <authorList>
            <person name="Fricke W.F."/>
            <person name="Mammel M.K."/>
            <person name="McDermott P.F."/>
            <person name="Tartera C."/>
            <person name="White D.G."/>
            <person name="Leclerc J.E."/>
            <person name="Ravel J."/>
            <person name="Cebula T.A."/>
        </authorList>
    </citation>
    <scope>NUCLEOTIDE SEQUENCE [LARGE SCALE GENOMIC DNA]</scope>
    <source>
        <strain>SL483</strain>
    </source>
</reference>
<protein>
    <recommendedName>
        <fullName evidence="1">LPS-assembly lipoprotein LptE</fullName>
    </recommendedName>
</protein>
<organism>
    <name type="scientific">Salmonella agona (strain SL483)</name>
    <dbReference type="NCBI Taxonomy" id="454166"/>
    <lineage>
        <taxon>Bacteria</taxon>
        <taxon>Pseudomonadati</taxon>
        <taxon>Pseudomonadota</taxon>
        <taxon>Gammaproteobacteria</taxon>
        <taxon>Enterobacterales</taxon>
        <taxon>Enterobacteriaceae</taxon>
        <taxon>Salmonella</taxon>
    </lineage>
</organism>
<name>LPTE_SALA4</name>
<proteinExistence type="inferred from homology"/>
<sequence length="196" mass="21459">MRYLVTLLLSLAVLVTAGCGWHLRSTTQVPASMKTMILDSGDPNGPLSRAVRNQLRLNNVNLLDKDTTRKDVPSLRLGTVTISQDTASVFQDGQTAEYQMVMTVNASVLIPGHDIYPISTKVYRSFFDNPQMALAKDNEQAMIVQEMYDKAAEQLIRKLTSVRAADIQATKEEATADNETAVPASTPARVSTTLSN</sequence>
<feature type="signal peptide" evidence="1">
    <location>
        <begin position="1"/>
        <end position="18"/>
    </location>
</feature>
<feature type="chain" id="PRO_1000138274" description="LPS-assembly lipoprotein LptE">
    <location>
        <begin position="19"/>
        <end position="196"/>
    </location>
</feature>
<feature type="region of interest" description="Disordered" evidence="2">
    <location>
        <begin position="174"/>
        <end position="196"/>
    </location>
</feature>
<feature type="lipid moiety-binding region" description="N-palmitoyl cysteine" evidence="1">
    <location>
        <position position="19"/>
    </location>
</feature>
<feature type="lipid moiety-binding region" description="S-diacylglycerol cysteine" evidence="1">
    <location>
        <position position="19"/>
    </location>
</feature>
<evidence type="ECO:0000255" key="1">
    <source>
        <dbReference type="HAMAP-Rule" id="MF_01186"/>
    </source>
</evidence>
<evidence type="ECO:0000256" key="2">
    <source>
        <dbReference type="SAM" id="MobiDB-lite"/>
    </source>
</evidence>
<accession>B5EZ88</accession>
<gene>
    <name evidence="1" type="primary">lptE</name>
    <name type="synonym">rlpB</name>
    <name type="ordered locus">SeAg_B0690</name>
</gene>
<keyword id="KW-0998">Cell outer membrane</keyword>
<keyword id="KW-0449">Lipoprotein</keyword>
<keyword id="KW-0472">Membrane</keyword>
<keyword id="KW-0564">Palmitate</keyword>
<keyword id="KW-0732">Signal</keyword>
<dbReference type="EMBL" id="CP001138">
    <property type="protein sequence ID" value="ACH52685.1"/>
    <property type="molecule type" value="Genomic_DNA"/>
</dbReference>
<dbReference type="RefSeq" id="WP_001269951.1">
    <property type="nucleotide sequence ID" value="NC_011149.1"/>
</dbReference>
<dbReference type="SMR" id="B5EZ88"/>
<dbReference type="KEGG" id="sea:SeAg_B0690"/>
<dbReference type="HOGENOM" id="CLU_103309_1_1_6"/>
<dbReference type="Proteomes" id="UP000008819">
    <property type="component" value="Chromosome"/>
</dbReference>
<dbReference type="GO" id="GO:0009279">
    <property type="term" value="C:cell outer membrane"/>
    <property type="evidence" value="ECO:0007669"/>
    <property type="project" value="UniProtKB-SubCell"/>
</dbReference>
<dbReference type="GO" id="GO:1990351">
    <property type="term" value="C:transporter complex"/>
    <property type="evidence" value="ECO:0007669"/>
    <property type="project" value="TreeGrafter"/>
</dbReference>
<dbReference type="GO" id="GO:0001530">
    <property type="term" value="F:lipopolysaccharide binding"/>
    <property type="evidence" value="ECO:0007669"/>
    <property type="project" value="TreeGrafter"/>
</dbReference>
<dbReference type="GO" id="GO:0043165">
    <property type="term" value="P:Gram-negative-bacterium-type cell outer membrane assembly"/>
    <property type="evidence" value="ECO:0007669"/>
    <property type="project" value="UniProtKB-UniRule"/>
</dbReference>
<dbReference type="GO" id="GO:0015920">
    <property type="term" value="P:lipopolysaccharide transport"/>
    <property type="evidence" value="ECO:0007669"/>
    <property type="project" value="TreeGrafter"/>
</dbReference>
<dbReference type="FunFam" id="3.30.160.150:FF:000001">
    <property type="entry name" value="LPS-assembly lipoprotein LptE"/>
    <property type="match status" value="1"/>
</dbReference>
<dbReference type="Gene3D" id="3.30.160.150">
    <property type="entry name" value="Lipoprotein like domain"/>
    <property type="match status" value="1"/>
</dbReference>
<dbReference type="HAMAP" id="MF_01186">
    <property type="entry name" value="LPS_assembly_LptE"/>
    <property type="match status" value="1"/>
</dbReference>
<dbReference type="InterPro" id="IPR007485">
    <property type="entry name" value="LPS_assembly_LptE"/>
</dbReference>
<dbReference type="NCBIfam" id="NF008062">
    <property type="entry name" value="PRK10796.1"/>
    <property type="match status" value="1"/>
</dbReference>
<dbReference type="PANTHER" id="PTHR38098">
    <property type="entry name" value="LPS-ASSEMBLY LIPOPROTEIN LPTE"/>
    <property type="match status" value="1"/>
</dbReference>
<dbReference type="PANTHER" id="PTHR38098:SF1">
    <property type="entry name" value="LPS-ASSEMBLY LIPOPROTEIN LPTE"/>
    <property type="match status" value="1"/>
</dbReference>
<dbReference type="Pfam" id="PF04390">
    <property type="entry name" value="LptE"/>
    <property type="match status" value="1"/>
</dbReference>
<dbReference type="PROSITE" id="PS51257">
    <property type="entry name" value="PROKAR_LIPOPROTEIN"/>
    <property type="match status" value="1"/>
</dbReference>
<comment type="function">
    <text evidence="1">Together with LptD, is involved in the assembly of lipopolysaccharide (LPS) at the surface of the outer membrane. Required for the proper assembly of LptD. Binds LPS and may serve as the LPS recognition site at the outer membrane.</text>
</comment>
<comment type="subunit">
    <text evidence="1">Component of the lipopolysaccharide transport and assembly complex. Interacts with LptD.</text>
</comment>
<comment type="subcellular location">
    <subcellularLocation>
        <location evidence="1">Cell outer membrane</location>
        <topology evidence="1">Lipid-anchor</topology>
    </subcellularLocation>
</comment>
<comment type="similarity">
    <text evidence="1">Belongs to the LptE lipoprotein family.</text>
</comment>